<accession>A3PFD3</accession>
<feature type="chain" id="PRO_0000335198" description="DNA mismatch repair protein MutS">
    <location>
        <begin position="1"/>
        <end position="913"/>
    </location>
</feature>
<feature type="region of interest" description="Disordered" evidence="2">
    <location>
        <begin position="18"/>
        <end position="50"/>
    </location>
</feature>
<feature type="compositionally biased region" description="Basic and acidic residues" evidence="2">
    <location>
        <begin position="19"/>
        <end position="42"/>
    </location>
</feature>
<feature type="binding site" evidence="1">
    <location>
        <begin position="720"/>
        <end position="727"/>
    </location>
    <ligand>
        <name>ATP</name>
        <dbReference type="ChEBI" id="CHEBI:30616"/>
    </ligand>
</feature>
<keyword id="KW-0067">ATP-binding</keyword>
<keyword id="KW-0227">DNA damage</keyword>
<keyword id="KW-0234">DNA repair</keyword>
<keyword id="KW-0238">DNA-binding</keyword>
<keyword id="KW-0547">Nucleotide-binding</keyword>
<keyword id="KW-1185">Reference proteome</keyword>
<protein>
    <recommendedName>
        <fullName evidence="1">DNA mismatch repair protein MutS</fullName>
    </recommendedName>
</protein>
<organism>
    <name type="scientific">Prochlorococcus marinus (strain MIT 9301)</name>
    <dbReference type="NCBI Taxonomy" id="167546"/>
    <lineage>
        <taxon>Bacteria</taxon>
        <taxon>Bacillati</taxon>
        <taxon>Cyanobacteriota</taxon>
        <taxon>Cyanophyceae</taxon>
        <taxon>Synechococcales</taxon>
        <taxon>Prochlorococcaceae</taxon>
        <taxon>Prochlorococcus</taxon>
    </lineage>
</organism>
<sequence>MQEDLIIQKNLFAIGNDNNKQKEKTKIPEDLSLEDLKKESQKRPRQRKNSTNLINKFKTDLISNKKNVCINEESYSYKTVSKLKLTPVMKHYVTLKEENKDRLLLYRLGDFFECFFEDAVLISNLLEITLTSKDAGKEIGKIPMAGVPHHAMDRYCADLIKKNYSVVICDQLEKSSGNYGTPIKRGITRIITPGTVIEEGMLIAKKNNWITAIYLSEENSNESYEWGISKADVSTGELITLEGQSLSKLFDEIIKLDSSEIIVGSNAVRNLLIKGNSQITYTVSQETNFGINEANYLIKNYFQIANLEGIGLKNLKNATRSLGGLLNYLEKINPSNLDKDSSVKISLDFPQIQYGHNKLIIDYQTQKNLEIKNTQRENNYVGSLLWSIDRTYTCMGARCLRRWIDSPLLNVNEIYKRQNIITNFFESKKLRTDTQNLLRAMGDLERLAGRACAGHASPRDLIAIAEGLKKLPRLKSIIELFKYDLPNWTDQLINIDEGLLELADTISFKLVENPPLSISEGGMIHDGVDNILDGLRNLMDDYSEWLNKEELKERKISKISNLKIQFHKNFGYYISINKSKVNLAPQHWIKRQTLTNEERYITSEIKNKENKIFQIKSRASSKEYEIFCELRNIVAEKTKQIRSIAKSIASLDALLGLSITSIENNFIKPLLIPINDSMTKNSTKIIAGRNPIVEQLLSDKKFVANDISFEDNQKLIILTGPNASGKSCFIRQLGLIQILAQIGSFVPANNAEIKIADRIFTRIGAVDDQSSGQSTFMVEMSETASILNQATSNSLVLLDEIGRGTSTFDGLSIAWSVSEYLAKKIQCNTIFATHYHELNYLKNSNKNIQNFQVLVEQNDDQLIFSHRIVRGGSNKSYGIEAAKLAGVPKEVIEKAKSVLNSLEENNKLNHNIK</sequence>
<dbReference type="EMBL" id="CP000576">
    <property type="protein sequence ID" value="ABO18458.1"/>
    <property type="molecule type" value="Genomic_DNA"/>
</dbReference>
<dbReference type="RefSeq" id="WP_011863742.1">
    <property type="nucleotide sequence ID" value="NC_009091.1"/>
</dbReference>
<dbReference type="SMR" id="A3PFD3"/>
<dbReference type="STRING" id="167546.P9301_18351"/>
<dbReference type="KEGG" id="pmg:P9301_18351"/>
<dbReference type="eggNOG" id="COG0249">
    <property type="taxonomic scope" value="Bacteria"/>
</dbReference>
<dbReference type="HOGENOM" id="CLU_002472_1_3_3"/>
<dbReference type="OrthoDB" id="9802448at2"/>
<dbReference type="Proteomes" id="UP000001430">
    <property type="component" value="Chromosome"/>
</dbReference>
<dbReference type="GO" id="GO:0005829">
    <property type="term" value="C:cytosol"/>
    <property type="evidence" value="ECO:0007669"/>
    <property type="project" value="TreeGrafter"/>
</dbReference>
<dbReference type="GO" id="GO:0005524">
    <property type="term" value="F:ATP binding"/>
    <property type="evidence" value="ECO:0007669"/>
    <property type="project" value="UniProtKB-UniRule"/>
</dbReference>
<dbReference type="GO" id="GO:0140664">
    <property type="term" value="F:ATP-dependent DNA damage sensor activity"/>
    <property type="evidence" value="ECO:0007669"/>
    <property type="project" value="InterPro"/>
</dbReference>
<dbReference type="GO" id="GO:0003684">
    <property type="term" value="F:damaged DNA binding"/>
    <property type="evidence" value="ECO:0007669"/>
    <property type="project" value="UniProtKB-UniRule"/>
</dbReference>
<dbReference type="GO" id="GO:0030983">
    <property type="term" value="F:mismatched DNA binding"/>
    <property type="evidence" value="ECO:0007669"/>
    <property type="project" value="InterPro"/>
</dbReference>
<dbReference type="GO" id="GO:0006298">
    <property type="term" value="P:mismatch repair"/>
    <property type="evidence" value="ECO:0007669"/>
    <property type="project" value="UniProtKB-UniRule"/>
</dbReference>
<dbReference type="CDD" id="cd03284">
    <property type="entry name" value="ABC_MutS1"/>
    <property type="match status" value="1"/>
</dbReference>
<dbReference type="FunFam" id="1.10.1420.10:FF:000001">
    <property type="entry name" value="DNA mismatch repair protein MutS"/>
    <property type="match status" value="1"/>
</dbReference>
<dbReference type="FunFam" id="3.40.50.300:FF:000870">
    <property type="entry name" value="MutS protein homolog 4"/>
    <property type="match status" value="1"/>
</dbReference>
<dbReference type="Gene3D" id="1.10.1420.10">
    <property type="match status" value="2"/>
</dbReference>
<dbReference type="Gene3D" id="3.40.1170.10">
    <property type="entry name" value="DNA repair protein MutS, domain I"/>
    <property type="match status" value="1"/>
</dbReference>
<dbReference type="Gene3D" id="3.30.420.110">
    <property type="entry name" value="MutS, connector domain"/>
    <property type="match status" value="1"/>
</dbReference>
<dbReference type="Gene3D" id="3.40.50.300">
    <property type="entry name" value="P-loop containing nucleotide triphosphate hydrolases"/>
    <property type="match status" value="1"/>
</dbReference>
<dbReference type="HAMAP" id="MF_00096">
    <property type="entry name" value="MutS"/>
    <property type="match status" value="1"/>
</dbReference>
<dbReference type="InterPro" id="IPR005748">
    <property type="entry name" value="DNA_mismatch_repair_MutS"/>
</dbReference>
<dbReference type="InterPro" id="IPR007695">
    <property type="entry name" value="DNA_mismatch_repair_MutS-lik_N"/>
</dbReference>
<dbReference type="InterPro" id="IPR017261">
    <property type="entry name" value="DNA_mismatch_repair_MutS/MSH"/>
</dbReference>
<dbReference type="InterPro" id="IPR000432">
    <property type="entry name" value="DNA_mismatch_repair_MutS_C"/>
</dbReference>
<dbReference type="InterPro" id="IPR007861">
    <property type="entry name" value="DNA_mismatch_repair_MutS_clamp"/>
</dbReference>
<dbReference type="InterPro" id="IPR007696">
    <property type="entry name" value="DNA_mismatch_repair_MutS_core"/>
</dbReference>
<dbReference type="InterPro" id="IPR016151">
    <property type="entry name" value="DNA_mismatch_repair_MutS_N"/>
</dbReference>
<dbReference type="InterPro" id="IPR036187">
    <property type="entry name" value="DNA_mismatch_repair_MutS_sf"/>
</dbReference>
<dbReference type="InterPro" id="IPR007860">
    <property type="entry name" value="DNA_mmatch_repair_MutS_con_dom"/>
</dbReference>
<dbReference type="InterPro" id="IPR045076">
    <property type="entry name" value="MutS"/>
</dbReference>
<dbReference type="InterPro" id="IPR036678">
    <property type="entry name" value="MutS_con_dom_sf"/>
</dbReference>
<dbReference type="InterPro" id="IPR027417">
    <property type="entry name" value="P-loop_NTPase"/>
</dbReference>
<dbReference type="NCBIfam" id="TIGR01070">
    <property type="entry name" value="mutS1"/>
    <property type="match status" value="1"/>
</dbReference>
<dbReference type="NCBIfam" id="NF003810">
    <property type="entry name" value="PRK05399.1"/>
    <property type="match status" value="1"/>
</dbReference>
<dbReference type="PANTHER" id="PTHR11361:SF34">
    <property type="entry name" value="DNA MISMATCH REPAIR PROTEIN MSH1, MITOCHONDRIAL"/>
    <property type="match status" value="1"/>
</dbReference>
<dbReference type="PANTHER" id="PTHR11361">
    <property type="entry name" value="DNA MISMATCH REPAIR PROTEIN MUTS FAMILY MEMBER"/>
    <property type="match status" value="1"/>
</dbReference>
<dbReference type="Pfam" id="PF01624">
    <property type="entry name" value="MutS_I"/>
    <property type="match status" value="1"/>
</dbReference>
<dbReference type="Pfam" id="PF05188">
    <property type="entry name" value="MutS_II"/>
    <property type="match status" value="1"/>
</dbReference>
<dbReference type="Pfam" id="PF05192">
    <property type="entry name" value="MutS_III"/>
    <property type="match status" value="1"/>
</dbReference>
<dbReference type="Pfam" id="PF05190">
    <property type="entry name" value="MutS_IV"/>
    <property type="match status" value="1"/>
</dbReference>
<dbReference type="Pfam" id="PF00488">
    <property type="entry name" value="MutS_V"/>
    <property type="match status" value="1"/>
</dbReference>
<dbReference type="PIRSF" id="PIRSF037677">
    <property type="entry name" value="DNA_mis_repair_Msh6"/>
    <property type="match status" value="1"/>
</dbReference>
<dbReference type="SMART" id="SM00534">
    <property type="entry name" value="MUTSac"/>
    <property type="match status" value="1"/>
</dbReference>
<dbReference type="SMART" id="SM00533">
    <property type="entry name" value="MUTSd"/>
    <property type="match status" value="1"/>
</dbReference>
<dbReference type="SUPFAM" id="SSF55271">
    <property type="entry name" value="DNA repair protein MutS, domain I"/>
    <property type="match status" value="1"/>
</dbReference>
<dbReference type="SUPFAM" id="SSF53150">
    <property type="entry name" value="DNA repair protein MutS, domain II"/>
    <property type="match status" value="1"/>
</dbReference>
<dbReference type="SUPFAM" id="SSF48334">
    <property type="entry name" value="DNA repair protein MutS, domain III"/>
    <property type="match status" value="1"/>
</dbReference>
<dbReference type="SUPFAM" id="SSF52540">
    <property type="entry name" value="P-loop containing nucleoside triphosphate hydrolases"/>
    <property type="match status" value="1"/>
</dbReference>
<dbReference type="PROSITE" id="PS00486">
    <property type="entry name" value="DNA_MISMATCH_REPAIR_2"/>
    <property type="match status" value="1"/>
</dbReference>
<gene>
    <name evidence="1" type="primary">mutS</name>
    <name type="ordered locus">P9301_18351</name>
</gene>
<evidence type="ECO:0000255" key="1">
    <source>
        <dbReference type="HAMAP-Rule" id="MF_00096"/>
    </source>
</evidence>
<evidence type="ECO:0000256" key="2">
    <source>
        <dbReference type="SAM" id="MobiDB-lite"/>
    </source>
</evidence>
<comment type="function">
    <text evidence="1">This protein is involved in the repair of mismatches in DNA. It is possible that it carries out the mismatch recognition step. This protein has a weak ATPase activity.</text>
</comment>
<comment type="similarity">
    <text evidence="1">Belongs to the DNA mismatch repair MutS family.</text>
</comment>
<reference key="1">
    <citation type="journal article" date="2007" name="PLoS Genet.">
        <title>Patterns and implications of gene gain and loss in the evolution of Prochlorococcus.</title>
        <authorList>
            <person name="Kettler G.C."/>
            <person name="Martiny A.C."/>
            <person name="Huang K."/>
            <person name="Zucker J."/>
            <person name="Coleman M.L."/>
            <person name="Rodrigue S."/>
            <person name="Chen F."/>
            <person name="Lapidus A."/>
            <person name="Ferriera S."/>
            <person name="Johnson J."/>
            <person name="Steglich C."/>
            <person name="Church G.M."/>
            <person name="Richardson P."/>
            <person name="Chisholm S.W."/>
        </authorList>
    </citation>
    <scope>NUCLEOTIDE SEQUENCE [LARGE SCALE GENOMIC DNA]</scope>
    <source>
        <strain>MIT 9301</strain>
    </source>
</reference>
<proteinExistence type="inferred from homology"/>
<name>MUTS_PROM0</name>